<feature type="peptide" id="PRO_0000044543" description="Potassium channel toxin alpha-KTx 8.4">
    <location>
        <begin position="1"/>
        <end position="29"/>
    </location>
</feature>
<feature type="disulfide bond" evidence="2">
    <location>
        <begin position="3"/>
        <end position="19"/>
    </location>
</feature>
<feature type="disulfide bond" evidence="2">
    <location>
        <begin position="6"/>
        <end position="24"/>
    </location>
</feature>
<feature type="disulfide bond" evidence="2">
    <location>
        <begin position="10"/>
        <end position="26"/>
    </location>
</feature>
<protein>
    <recommendedName>
        <fullName evidence="4">Potassium channel toxin alpha-KTx 8.4</fullName>
    </recommendedName>
    <alternativeName>
        <fullName evidence="3">Leiuropeptide III</fullName>
        <shortName>LpIII</shortName>
    </alternativeName>
    <alternativeName>
        <fullName evidence="4">Leiuropeptide-3</fullName>
    </alternativeName>
</protein>
<comment type="function">
    <text evidence="1">Inhibits voltage-gated potassium channels.</text>
</comment>
<comment type="subcellular location">
    <subcellularLocation>
        <location>Secreted</location>
    </subcellularLocation>
</comment>
<comment type="tissue specificity">
    <text>Expressed by the venom gland.</text>
</comment>
<comment type="domain">
    <text evidence="2">Has the structural arrangement of an alpha-helix connected to a beta-sheet by disulfide bonds (CSalpha/beta).</text>
</comment>
<comment type="similarity">
    <text evidence="4">Belongs to the short scorpion toxin superfamily. Potassium channel inhibitor family. Alpha-KTx 08 subfamily.</text>
</comment>
<dbReference type="SMR" id="P80671"/>
<dbReference type="GO" id="GO:0005576">
    <property type="term" value="C:extracellular region"/>
    <property type="evidence" value="ECO:0007669"/>
    <property type="project" value="UniProtKB-SubCell"/>
</dbReference>
<dbReference type="GO" id="GO:0008200">
    <property type="term" value="F:ion channel inhibitor activity"/>
    <property type="evidence" value="ECO:0007669"/>
    <property type="project" value="InterPro"/>
</dbReference>
<dbReference type="GO" id="GO:0015459">
    <property type="term" value="F:potassium channel regulator activity"/>
    <property type="evidence" value="ECO:0007669"/>
    <property type="project" value="UniProtKB-KW"/>
</dbReference>
<dbReference type="GO" id="GO:0090729">
    <property type="term" value="F:toxin activity"/>
    <property type="evidence" value="ECO:0007669"/>
    <property type="project" value="UniProtKB-KW"/>
</dbReference>
<dbReference type="InterPro" id="IPR036574">
    <property type="entry name" value="Scorpion_toxin-like_sf"/>
</dbReference>
<dbReference type="InterPro" id="IPR008911">
    <property type="entry name" value="Toxin_alpha-KTx_8/9"/>
</dbReference>
<dbReference type="Pfam" id="PF05453">
    <property type="entry name" value="Toxin_6"/>
    <property type="match status" value="1"/>
</dbReference>
<dbReference type="SUPFAM" id="SSF57095">
    <property type="entry name" value="Scorpion toxin-like"/>
    <property type="match status" value="1"/>
</dbReference>
<name>KAX84_LEIHE</name>
<accession>P80671</accession>
<sequence>VSCEDCPDHCSTQKARAKCDNDKCVCEPK</sequence>
<organism>
    <name type="scientific">Leiurus hebraeus</name>
    <name type="common">Hebrew deathstalker scorpion</name>
    <name type="synonym">Leiurus quinquestriatus hebraeus</name>
    <dbReference type="NCBI Taxonomy" id="2899558"/>
    <lineage>
        <taxon>Eukaryota</taxon>
        <taxon>Metazoa</taxon>
        <taxon>Ecdysozoa</taxon>
        <taxon>Arthropoda</taxon>
        <taxon>Chelicerata</taxon>
        <taxon>Arachnida</taxon>
        <taxon>Scorpiones</taxon>
        <taxon>Buthida</taxon>
        <taxon>Buthoidea</taxon>
        <taxon>Buthidae</taxon>
        <taxon>Leiurus</taxon>
    </lineage>
</organism>
<keyword id="KW-0903">Direct protein sequencing</keyword>
<keyword id="KW-1015">Disulfide bond</keyword>
<keyword id="KW-0872">Ion channel impairing toxin</keyword>
<keyword id="KW-0632">Potassium channel impairing toxin</keyword>
<keyword id="KW-0964">Secreted</keyword>
<keyword id="KW-0800">Toxin</keyword>
<evidence type="ECO:0000250" key="1"/>
<evidence type="ECO:0000269" key="2">
    <source>
    </source>
</evidence>
<evidence type="ECO:0000303" key="3">
    <source>
    </source>
</evidence>
<evidence type="ECO:0000305" key="4"/>
<reference key="1">
    <citation type="journal article" date="1997" name="J. Pept. Res.">
        <title>Characterization of a new family of toxin-like peptides from the venom of the scorpion Leiurus quinquestriatus hebraeus. 1H-NMR structure of leiuropeptide II.</title>
        <authorList>
            <person name="Buisine E."/>
            <person name="Wieruszeski J.-M."/>
            <person name="Lippens G."/>
            <person name="Wouters D."/>
            <person name="Tartar A."/>
            <person name="Sautiere P."/>
        </authorList>
    </citation>
    <scope>PROTEIN SEQUENCE</scope>
    <scope>STRUCTURE BY NMR</scope>
    <scope>DISULFIDE BONDS</scope>
    <source>
        <tissue>Venom</tissue>
    </source>
</reference>
<reference key="2">
    <citation type="journal article" date="2006" name="Toxicon">
        <title>Moving pieces in a taxonomic puzzle: venom 2D-LC/MS and data clustering analyses to infer phylogenetic relationships in some scorpions from the Buthidae family (Scorpiones).</title>
        <authorList>
            <person name="Nascimento D.G."/>
            <person name="Rates B."/>
            <person name="Santos D.M."/>
            <person name="Verano-Braga T."/>
            <person name="Barbosa-Silva A."/>
            <person name="Dutra A.A.A."/>
            <person name="Biondi I."/>
            <person name="Martin-Eauclaire M.-F."/>
            <person name="De Lima M.E."/>
            <person name="Pimenta A.M.C."/>
        </authorList>
    </citation>
    <scope>IDENTIFICATION BY MASS SPECTROMETRY</scope>
</reference>
<proteinExistence type="evidence at protein level"/>